<sequence length="292" mass="32824">MTTETTTATATAKIPAPATPYQEDIARYWNNEARPVNLRLGDVDGLYHHHYGIGPVDRAALGDPEHSEYEKKVIAELHRLESAQAEFLMDHLGQAGPDDTLVDAGCGRGGSMVMAHRRFGSRVEGVTLSAAQADFGNRRARELRIDDHVRSRVCNMLDTPFDKGAVTASWNNESTMYVDLHDLFSEHSRFLKVGGRYVTITGCWNPRYGQPSKWVSQINAHFECNIHSRREYLRAMADNRLVPHTIVDLTPDTLPYWELRATSSLVTGIEKAFIESYRDGSFQYVLIAADRV</sequence>
<accession>Q9F1Y5</accession>
<protein>
    <recommendedName>
        <fullName>Geranyl diphosphate 2-C-methyltransferase</fullName>
        <shortName>GPP methyltransferase</shortName>
        <ecNumber>2.1.1.255</ecNumber>
    </recommendedName>
</protein>
<evidence type="ECO:0000269" key="1">
    <source>
    </source>
</evidence>
<evidence type="ECO:0000305" key="2"/>
<evidence type="ECO:0000305" key="3">
    <source>
    </source>
</evidence>
<evidence type="ECO:0007829" key="4">
    <source>
        <dbReference type="PDB" id="3VC1"/>
    </source>
</evidence>
<dbReference type="EC" id="2.1.1.255"/>
<dbReference type="EMBL" id="AB035202">
    <property type="protein sequence ID" value="BAB20434.1"/>
    <property type="molecule type" value="Genomic_DNA"/>
</dbReference>
<dbReference type="EMBL" id="AL939132">
    <property type="protein sequence ID" value="CAC44557.1"/>
    <property type="molecule type" value="Genomic_DNA"/>
</dbReference>
<dbReference type="RefSeq" id="NP_631739.1">
    <property type="nucleotide sequence ID" value="NC_003888.3"/>
</dbReference>
<dbReference type="RefSeq" id="WP_011031840.1">
    <property type="nucleotide sequence ID" value="NZ_VNID01000005.1"/>
</dbReference>
<dbReference type="PDB" id="3VC1">
    <property type="method" value="X-ray"/>
    <property type="resolution" value="1.82 A"/>
    <property type="chains" value="A/B/C/D/E/F/G/H/I/J/K/L=1-292"/>
</dbReference>
<dbReference type="PDB" id="3VC2">
    <property type="method" value="X-ray"/>
    <property type="resolution" value="2.05 A"/>
    <property type="chains" value="A/B/C/D/E/F/G/H/I/J/K/L=1-292"/>
</dbReference>
<dbReference type="PDBsum" id="3VC1"/>
<dbReference type="PDBsum" id="3VC2"/>
<dbReference type="SMR" id="Q9F1Y5"/>
<dbReference type="STRING" id="100226.gene:17765361"/>
<dbReference type="PaxDb" id="100226-SCO7701"/>
<dbReference type="KEGG" id="sco:SCO7701"/>
<dbReference type="PATRIC" id="fig|100226.15.peg.7821"/>
<dbReference type="eggNOG" id="COG2230">
    <property type="taxonomic scope" value="Bacteria"/>
</dbReference>
<dbReference type="HOGENOM" id="CLU_1057338_0_0_11"/>
<dbReference type="InParanoid" id="Q9F1Y5"/>
<dbReference type="OrthoDB" id="3279989at2"/>
<dbReference type="PhylomeDB" id="Q9F1Y5"/>
<dbReference type="BioCyc" id="MetaCyc:MONOMER-17559"/>
<dbReference type="BRENDA" id="2.1.1.255">
    <property type="organism ID" value="5998"/>
</dbReference>
<dbReference type="SABIO-RK" id="Q9F1Y5"/>
<dbReference type="EvolutionaryTrace" id="Q9F1Y5"/>
<dbReference type="Proteomes" id="UP000001973">
    <property type="component" value="Chromosome"/>
</dbReference>
<dbReference type="GO" id="GO:0008169">
    <property type="term" value="F:C-methyltransferase activity"/>
    <property type="evidence" value="ECO:0000314"/>
    <property type="project" value="UniProtKB"/>
</dbReference>
<dbReference type="GO" id="GO:0000287">
    <property type="term" value="F:magnesium ion binding"/>
    <property type="evidence" value="ECO:0007669"/>
    <property type="project" value="InterPro"/>
</dbReference>
<dbReference type="GO" id="GO:1904047">
    <property type="term" value="F:S-adenosyl-L-methionine binding"/>
    <property type="evidence" value="ECO:0007669"/>
    <property type="project" value="InterPro"/>
</dbReference>
<dbReference type="GO" id="GO:0008757">
    <property type="term" value="F:S-adenosylmethionine-dependent methyltransferase activity"/>
    <property type="evidence" value="ECO:0000314"/>
    <property type="project" value="UniProtKB"/>
</dbReference>
<dbReference type="GO" id="GO:0032259">
    <property type="term" value="P:methylation"/>
    <property type="evidence" value="ECO:0007669"/>
    <property type="project" value="UniProtKB-KW"/>
</dbReference>
<dbReference type="GO" id="GO:0042214">
    <property type="term" value="P:terpene metabolic process"/>
    <property type="evidence" value="ECO:0000314"/>
    <property type="project" value="UniProtKB"/>
</dbReference>
<dbReference type="CDD" id="cd02440">
    <property type="entry name" value="AdoMet_MTases"/>
    <property type="match status" value="1"/>
</dbReference>
<dbReference type="FunFam" id="3.40.50.150:FF:000183">
    <property type="entry name" value="Geranyl diphosphate 2-C-methyltransferase"/>
    <property type="match status" value="1"/>
</dbReference>
<dbReference type="Gene3D" id="3.40.50.150">
    <property type="entry name" value="Vaccinia Virus protein VP39"/>
    <property type="match status" value="1"/>
</dbReference>
<dbReference type="InterPro" id="IPR050447">
    <property type="entry name" value="Erg6_SMT_methyltransf"/>
</dbReference>
<dbReference type="InterPro" id="IPR049645">
    <property type="entry name" value="GPPMT_Stmyces"/>
</dbReference>
<dbReference type="InterPro" id="IPR013216">
    <property type="entry name" value="Methyltransf_11"/>
</dbReference>
<dbReference type="InterPro" id="IPR029063">
    <property type="entry name" value="SAM-dependent_MTases_sf"/>
</dbReference>
<dbReference type="NCBIfam" id="NF041943">
    <property type="entry name" value="GPPMT_Stmyces"/>
    <property type="match status" value="1"/>
</dbReference>
<dbReference type="PANTHER" id="PTHR44068:SF11">
    <property type="entry name" value="GERANYL DIPHOSPHATE 2-C-METHYLTRANSFERASE"/>
    <property type="match status" value="1"/>
</dbReference>
<dbReference type="PANTHER" id="PTHR44068">
    <property type="entry name" value="ZGC:194242"/>
    <property type="match status" value="1"/>
</dbReference>
<dbReference type="Pfam" id="PF08241">
    <property type="entry name" value="Methyltransf_11"/>
    <property type="match status" value="1"/>
</dbReference>
<dbReference type="SUPFAM" id="SSF53335">
    <property type="entry name" value="S-adenosyl-L-methionine-dependent methyltransferases"/>
    <property type="match status" value="1"/>
</dbReference>
<organism>
    <name type="scientific">Streptomyces coelicolor (strain ATCC BAA-471 / A3(2) / M145)</name>
    <dbReference type="NCBI Taxonomy" id="100226"/>
    <lineage>
        <taxon>Bacteria</taxon>
        <taxon>Bacillati</taxon>
        <taxon>Actinomycetota</taxon>
        <taxon>Actinomycetes</taxon>
        <taxon>Kitasatosporales</taxon>
        <taxon>Streptomycetaceae</taxon>
        <taxon>Streptomyces</taxon>
        <taxon>Streptomyces albidoflavus group</taxon>
    </lineage>
</organism>
<gene>
    <name type="ordered locus">SCO7701</name>
    <name type="ORF">orf4</name>
    <name type="ORF">SCBAC12C8.02</name>
</gene>
<comment type="function">
    <text evidence="1">Catalyzes the SAM-dependent methylation of geranyl diphosphate (GPP) to yield (E)-2-methylgeranyl diphosphate (2-MeGPP).</text>
</comment>
<comment type="catalytic activity">
    <reaction evidence="1">
        <text>(2E)-geranyl diphosphate + S-adenosyl-L-methionine = (E)-2-methylgeranyl diphosphate + S-adenosyl-L-homocysteine + H(+)</text>
        <dbReference type="Rhea" id="RHEA:32519"/>
        <dbReference type="ChEBI" id="CHEBI:15378"/>
        <dbReference type="ChEBI" id="CHEBI:57856"/>
        <dbReference type="ChEBI" id="CHEBI:58057"/>
        <dbReference type="ChEBI" id="CHEBI:59789"/>
        <dbReference type="ChEBI" id="CHEBI:61984"/>
        <dbReference type="EC" id="2.1.1.255"/>
    </reaction>
</comment>
<comment type="cofactor">
    <cofactor evidence="3">
        <name>Mg(2+)</name>
        <dbReference type="ChEBI" id="CHEBI:18420"/>
    </cofactor>
</comment>
<comment type="biophysicochemical properties">
    <kinetics>
        <KM evidence="1">13.1 uM for geranyl diphosphate</KM>
        <KM evidence="1">4.3 uM for S-adenosyl-L-methionine</KM>
    </kinetics>
</comment>
<comment type="similarity">
    <text evidence="2">Belongs to the geranyl diphosphate 2-C-methyltransferase family.</text>
</comment>
<feature type="chain" id="PRO_0000403379" description="Geranyl diphosphate 2-C-methyltransferase">
    <location>
        <begin position="1"/>
        <end position="292"/>
    </location>
</feature>
<feature type="helix" evidence="4">
    <location>
        <begin position="7"/>
        <end position="12"/>
    </location>
</feature>
<feature type="helix" evidence="4">
    <location>
        <begin position="20"/>
        <end position="31"/>
    </location>
</feature>
<feature type="helix" evidence="4">
    <location>
        <begin position="35"/>
        <end position="41"/>
    </location>
</feature>
<feature type="turn" evidence="4">
    <location>
        <begin position="42"/>
        <end position="44"/>
    </location>
</feature>
<feature type="helix" evidence="4">
    <location>
        <begin position="58"/>
        <end position="61"/>
    </location>
</feature>
<feature type="helix" evidence="4">
    <location>
        <begin position="69"/>
        <end position="89"/>
    </location>
</feature>
<feature type="strand" evidence="4">
    <location>
        <begin position="100"/>
        <end position="105"/>
    </location>
</feature>
<feature type="helix" evidence="4">
    <location>
        <begin position="110"/>
        <end position="119"/>
    </location>
</feature>
<feature type="strand" evidence="4">
    <location>
        <begin position="122"/>
        <end position="128"/>
    </location>
</feature>
<feature type="helix" evidence="4">
    <location>
        <begin position="130"/>
        <end position="142"/>
    </location>
</feature>
<feature type="turn" evidence="4">
    <location>
        <begin position="146"/>
        <end position="148"/>
    </location>
</feature>
<feature type="strand" evidence="4">
    <location>
        <begin position="149"/>
        <end position="153"/>
    </location>
</feature>
<feature type="strand" evidence="4">
    <location>
        <begin position="166"/>
        <end position="173"/>
    </location>
</feature>
<feature type="helix" evidence="4">
    <location>
        <begin position="175"/>
        <end position="177"/>
    </location>
</feature>
<feature type="helix" evidence="4">
    <location>
        <begin position="180"/>
        <end position="190"/>
    </location>
</feature>
<feature type="strand" evidence="4">
    <location>
        <begin position="191"/>
        <end position="204"/>
    </location>
</feature>
<feature type="turn" evidence="4">
    <location>
        <begin position="206"/>
        <end position="208"/>
    </location>
</feature>
<feature type="helix" evidence="4">
    <location>
        <begin position="213"/>
        <end position="222"/>
    </location>
</feature>
<feature type="helix" evidence="4">
    <location>
        <begin position="229"/>
        <end position="237"/>
    </location>
</feature>
<feature type="turn" evidence="4">
    <location>
        <begin position="238"/>
        <end position="240"/>
    </location>
</feature>
<feature type="strand" evidence="4">
    <location>
        <begin position="241"/>
        <end position="248"/>
    </location>
</feature>
<feature type="helix" evidence="4">
    <location>
        <begin position="250"/>
        <end position="260"/>
    </location>
</feature>
<feature type="helix" evidence="4">
    <location>
        <begin position="270"/>
        <end position="278"/>
    </location>
</feature>
<feature type="strand" evidence="4">
    <location>
        <begin position="281"/>
        <end position="291"/>
    </location>
</feature>
<name>GPPMT_STRCO</name>
<proteinExistence type="evidence at protein level"/>
<reference key="1">
    <citation type="submission" date="1999-11" db="EMBL/GenBank/DDBJ databases">
        <title>S.coelicolor orf3 orf1 p52 orf2 orf4 orf5.</title>
        <authorList>
            <person name="Watanabe M."/>
            <person name="Kawamoto S."/>
            <person name="Ochi K."/>
        </authorList>
    </citation>
    <scope>NUCLEOTIDE SEQUENCE [GENOMIC DNA]</scope>
    <source>
        <strain>A3(2) / 1147</strain>
    </source>
</reference>
<reference key="2">
    <citation type="journal article" date="2002" name="Nature">
        <title>Complete genome sequence of the model actinomycete Streptomyces coelicolor A3(2).</title>
        <authorList>
            <person name="Bentley S.D."/>
            <person name="Chater K.F."/>
            <person name="Cerdeno-Tarraga A.-M."/>
            <person name="Challis G.L."/>
            <person name="Thomson N.R."/>
            <person name="James K.D."/>
            <person name="Harris D.E."/>
            <person name="Quail M.A."/>
            <person name="Kieser H."/>
            <person name="Harper D."/>
            <person name="Bateman A."/>
            <person name="Brown S."/>
            <person name="Chandra G."/>
            <person name="Chen C.W."/>
            <person name="Collins M."/>
            <person name="Cronin A."/>
            <person name="Fraser A."/>
            <person name="Goble A."/>
            <person name="Hidalgo J."/>
            <person name="Hornsby T."/>
            <person name="Howarth S."/>
            <person name="Huang C.-H."/>
            <person name="Kieser T."/>
            <person name="Larke L."/>
            <person name="Murphy L.D."/>
            <person name="Oliver K."/>
            <person name="O'Neil S."/>
            <person name="Rabbinowitsch E."/>
            <person name="Rajandream M.A."/>
            <person name="Rutherford K.M."/>
            <person name="Rutter S."/>
            <person name="Seeger K."/>
            <person name="Saunders D."/>
            <person name="Sharp S."/>
            <person name="Squares R."/>
            <person name="Squares S."/>
            <person name="Taylor K."/>
            <person name="Warren T."/>
            <person name="Wietzorrek A."/>
            <person name="Woodward J.R."/>
            <person name="Barrell B.G."/>
            <person name="Parkhill J."/>
            <person name="Hopwood D.A."/>
        </authorList>
    </citation>
    <scope>NUCLEOTIDE SEQUENCE [LARGE SCALE GENOMIC DNA]</scope>
    <source>
        <strain>ATCC BAA-471 / A3(2) / M145</strain>
    </source>
</reference>
<reference key="3">
    <citation type="journal article" date="2008" name="J. Am. Chem. Soc.">
        <title>Biochemistry and molecular genetics of the biosynthesis of the earthy odorant methylisoborneol in Streptomyces coelicolor.</title>
        <authorList>
            <person name="Wang C.M."/>
            <person name="Cane D.E."/>
        </authorList>
    </citation>
    <scope>FUNCTION</scope>
    <scope>CATALYTIC ACTIVITY</scope>
    <scope>COFACTOR</scope>
    <scope>PATHWAY</scope>
    <scope>KINETIC PARAMETERS</scope>
    <scope>IDENTIFICATION BY MASS SPECTROMETRY</scope>
    <source>
        <strain>A3(2) / NRRL B-16638</strain>
    </source>
</reference>
<reference key="4">
    <citation type="journal article" date="2010" name="J. Am. Chem. Soc.">
        <authorList>
            <person name="Wang C.M."/>
            <person name="Cane D.E."/>
        </authorList>
    </citation>
    <scope>ERRATUM OF PUBMED:18563898</scope>
</reference>
<keyword id="KW-0002">3D-structure</keyword>
<keyword id="KW-0460">Magnesium</keyword>
<keyword id="KW-0489">Methyltransferase</keyword>
<keyword id="KW-1185">Reference proteome</keyword>
<keyword id="KW-0949">S-adenosyl-L-methionine</keyword>
<keyword id="KW-0808">Transferase</keyword>